<feature type="signal peptide" evidence="2">
    <location>
        <begin position="1"/>
        <end position="27"/>
    </location>
</feature>
<feature type="chain" id="PRO_0000307159" description="Brorin">
    <location>
        <begin position="28"/>
        <end position="325"/>
    </location>
</feature>
<feature type="domain" description="VWFC 1" evidence="3">
    <location>
        <begin position="153"/>
        <end position="212"/>
    </location>
</feature>
<feature type="domain" description="VWFC 2" evidence="3">
    <location>
        <begin position="216"/>
        <end position="274"/>
    </location>
</feature>
<feature type="region of interest" description="Disordered" evidence="4">
    <location>
        <begin position="37"/>
        <end position="121"/>
    </location>
</feature>
<feature type="short sequence motif" description="Mediates cell adhesion" evidence="1">
    <location>
        <begin position="114"/>
        <end position="116"/>
    </location>
</feature>
<feature type="compositionally biased region" description="Basic and acidic residues" evidence="4">
    <location>
        <begin position="44"/>
        <end position="56"/>
    </location>
</feature>
<feature type="compositionally biased region" description="Basic and acidic residues" evidence="4">
    <location>
        <begin position="64"/>
        <end position="78"/>
    </location>
</feature>
<feature type="sequence variant" id="VAR_035371" description="In dbSNP:rs769604.">
    <original>A</original>
    <variation>G</variation>
    <location>
        <position position="120"/>
    </location>
</feature>
<feature type="sequence conflict" description="In Ref. 1; BAF51551 and 2; AAQ88759." evidence="5" ref="1 2">
    <original>S</original>
    <variation>T</variation>
    <location>
        <position position="52"/>
    </location>
</feature>
<accession>Q2TAL6</accession>
<accession>Q6UXE2</accession>
<evidence type="ECO:0000250" key="1"/>
<evidence type="ECO:0000255" key="2"/>
<evidence type="ECO:0000255" key="3">
    <source>
        <dbReference type="PROSITE-ProRule" id="PRU00220"/>
    </source>
</evidence>
<evidence type="ECO:0000256" key="4">
    <source>
        <dbReference type="SAM" id="MobiDB-lite"/>
    </source>
</evidence>
<evidence type="ECO:0000305" key="5"/>
<proteinExistence type="evidence at protein level"/>
<reference key="1">
    <citation type="journal article" date="2007" name="J. Biol. Chem.">
        <title>Brorin, a novel secreted bone morphogenetic protein antagonist, promotes neurogenesis in mouse neural precursor cells.</title>
        <authorList>
            <person name="Koike N."/>
            <person name="Kassai Y."/>
            <person name="Kouta Y."/>
            <person name="Miwa H."/>
            <person name="Konishi M."/>
            <person name="Itoh N."/>
        </authorList>
    </citation>
    <scope>NUCLEOTIDE SEQUENCE [MRNA]</scope>
</reference>
<reference key="2">
    <citation type="journal article" date="2003" name="Genome Res.">
        <title>The secreted protein discovery initiative (SPDI), a large-scale effort to identify novel human secreted and transmembrane proteins: a bioinformatics assessment.</title>
        <authorList>
            <person name="Clark H.F."/>
            <person name="Gurney A.L."/>
            <person name="Abaya E."/>
            <person name="Baker K."/>
            <person name="Baldwin D.T."/>
            <person name="Brush J."/>
            <person name="Chen J."/>
            <person name="Chow B."/>
            <person name="Chui C."/>
            <person name="Crowley C."/>
            <person name="Currell B."/>
            <person name="Deuel B."/>
            <person name="Dowd P."/>
            <person name="Eaton D."/>
            <person name="Foster J.S."/>
            <person name="Grimaldi C."/>
            <person name="Gu Q."/>
            <person name="Hass P.E."/>
            <person name="Heldens S."/>
            <person name="Huang A."/>
            <person name="Kim H.S."/>
            <person name="Klimowski L."/>
            <person name="Jin Y."/>
            <person name="Johnson S."/>
            <person name="Lee J."/>
            <person name="Lewis L."/>
            <person name="Liao D."/>
            <person name="Mark M.R."/>
            <person name="Robbie E."/>
            <person name="Sanchez C."/>
            <person name="Schoenfeld J."/>
            <person name="Seshagiri S."/>
            <person name="Simmons L."/>
            <person name="Singh J."/>
            <person name="Smith V."/>
            <person name="Stinson J."/>
            <person name="Vagts A."/>
            <person name="Vandlen R.L."/>
            <person name="Watanabe C."/>
            <person name="Wieand D."/>
            <person name="Woods K."/>
            <person name="Xie M.-H."/>
            <person name="Yansura D.G."/>
            <person name="Yi S."/>
            <person name="Yu G."/>
            <person name="Yuan J."/>
            <person name="Zhang M."/>
            <person name="Zhang Z."/>
            <person name="Goddard A.D."/>
            <person name="Wood W.I."/>
            <person name="Godowski P.J."/>
            <person name="Gray A.M."/>
        </authorList>
    </citation>
    <scope>NUCLEOTIDE SEQUENCE [LARGE SCALE MRNA]</scope>
</reference>
<reference key="3">
    <citation type="journal article" date="2003" name="Science">
        <title>Human chromosome 7: DNA sequence and biology.</title>
        <authorList>
            <person name="Scherer S.W."/>
            <person name="Cheung J."/>
            <person name="MacDonald J.R."/>
            <person name="Osborne L.R."/>
            <person name="Nakabayashi K."/>
            <person name="Herbrick J.-A."/>
            <person name="Carson A.R."/>
            <person name="Parker-Katiraee L."/>
            <person name="Skaug J."/>
            <person name="Khaja R."/>
            <person name="Zhang J."/>
            <person name="Hudek A.K."/>
            <person name="Li M."/>
            <person name="Haddad M."/>
            <person name="Duggan G.E."/>
            <person name="Fernandez B.A."/>
            <person name="Kanematsu E."/>
            <person name="Gentles S."/>
            <person name="Christopoulos C.C."/>
            <person name="Choufani S."/>
            <person name="Kwasnicka D."/>
            <person name="Zheng X.H."/>
            <person name="Lai Z."/>
            <person name="Nusskern D.R."/>
            <person name="Zhang Q."/>
            <person name="Gu Z."/>
            <person name="Lu F."/>
            <person name="Zeesman S."/>
            <person name="Nowaczyk M.J."/>
            <person name="Teshima I."/>
            <person name="Chitayat D."/>
            <person name="Shuman C."/>
            <person name="Weksberg R."/>
            <person name="Zackai E.H."/>
            <person name="Grebe T.A."/>
            <person name="Cox S.R."/>
            <person name="Kirkpatrick S.J."/>
            <person name="Rahman N."/>
            <person name="Friedman J.M."/>
            <person name="Heng H.H.Q."/>
            <person name="Pelicci P.G."/>
            <person name="Lo-Coco F."/>
            <person name="Belloni E."/>
            <person name="Shaffer L.G."/>
            <person name="Pober B."/>
            <person name="Morton C.C."/>
            <person name="Gusella J.F."/>
            <person name="Bruns G.A.P."/>
            <person name="Korf B.R."/>
            <person name="Quade B.J."/>
            <person name="Ligon A.H."/>
            <person name="Ferguson H."/>
            <person name="Higgins A.W."/>
            <person name="Leach N.T."/>
            <person name="Herrick S.R."/>
            <person name="Lemyre E."/>
            <person name="Farra C.G."/>
            <person name="Kim H.-G."/>
            <person name="Summers A.M."/>
            <person name="Gripp K.W."/>
            <person name="Roberts W."/>
            <person name="Szatmari P."/>
            <person name="Winsor E.J.T."/>
            <person name="Grzeschik K.-H."/>
            <person name="Teebi A."/>
            <person name="Minassian B.A."/>
            <person name="Kere J."/>
            <person name="Armengol L."/>
            <person name="Pujana M.A."/>
            <person name="Estivill X."/>
            <person name="Wilson M.D."/>
            <person name="Koop B.F."/>
            <person name="Tosi S."/>
            <person name="Moore G.E."/>
            <person name="Boright A.P."/>
            <person name="Zlotorynski E."/>
            <person name="Kerem B."/>
            <person name="Kroisel P.M."/>
            <person name="Petek E."/>
            <person name="Oscier D.G."/>
            <person name="Mould S.J."/>
            <person name="Doehner H."/>
            <person name="Doehner K."/>
            <person name="Rommens J.M."/>
            <person name="Vincent J.B."/>
            <person name="Venter J.C."/>
            <person name="Li P.W."/>
            <person name="Mural R.J."/>
            <person name="Adams M.D."/>
            <person name="Tsui L.-C."/>
        </authorList>
    </citation>
    <scope>NUCLEOTIDE SEQUENCE [LARGE SCALE GENOMIC DNA]</scope>
</reference>
<reference key="4">
    <citation type="submission" date="2005-09" db="EMBL/GenBank/DDBJ databases">
        <authorList>
            <person name="Mural R.J."/>
            <person name="Istrail S."/>
            <person name="Sutton G.G."/>
            <person name="Florea L."/>
            <person name="Halpern A.L."/>
            <person name="Mobarry C.M."/>
            <person name="Lippert R."/>
            <person name="Walenz B."/>
            <person name="Shatkay H."/>
            <person name="Dew I."/>
            <person name="Miller J.R."/>
            <person name="Flanigan M.J."/>
            <person name="Edwards N.J."/>
            <person name="Bolanos R."/>
            <person name="Fasulo D."/>
            <person name="Halldorsson B.V."/>
            <person name="Hannenhalli S."/>
            <person name="Turner R."/>
            <person name="Yooseph S."/>
            <person name="Lu F."/>
            <person name="Nusskern D.R."/>
            <person name="Shue B.C."/>
            <person name="Zheng X.H."/>
            <person name="Zhong F."/>
            <person name="Delcher A.L."/>
            <person name="Huson D.H."/>
            <person name="Kravitz S.A."/>
            <person name="Mouchard L."/>
            <person name="Reinert K."/>
            <person name="Remington K.A."/>
            <person name="Clark A.G."/>
            <person name="Waterman M.S."/>
            <person name="Eichler E.E."/>
            <person name="Adams M.D."/>
            <person name="Hunkapiller M.W."/>
            <person name="Myers E.W."/>
            <person name="Venter J.C."/>
        </authorList>
    </citation>
    <scope>NUCLEOTIDE SEQUENCE [LARGE SCALE GENOMIC DNA]</scope>
</reference>
<reference key="5">
    <citation type="journal article" date="2004" name="Genome Res.">
        <title>The status, quality, and expansion of the NIH full-length cDNA project: the Mammalian Gene Collection (MGC).</title>
        <authorList>
            <consortium name="The MGC Project Team"/>
        </authorList>
    </citation>
    <scope>NUCLEOTIDE SEQUENCE [LARGE SCALE MRNA]</scope>
    <source>
        <tissue>Brain</tissue>
    </source>
</reference>
<name>VWC2_HUMAN</name>
<dbReference type="EMBL" id="AB292671">
    <property type="protein sequence ID" value="BAF51551.1"/>
    <property type="molecule type" value="mRNA"/>
</dbReference>
<dbReference type="EMBL" id="AY358393">
    <property type="protein sequence ID" value="AAQ88759.1"/>
    <property type="molecule type" value="mRNA"/>
</dbReference>
<dbReference type="EMBL" id="CH471128">
    <property type="protein sequence ID" value="EAW60985.1"/>
    <property type="molecule type" value="Genomic_DNA"/>
</dbReference>
<dbReference type="EMBL" id="CH236955">
    <property type="protein sequence ID" value="EAL23904.1"/>
    <property type="molecule type" value="Genomic_DNA"/>
</dbReference>
<dbReference type="EMBL" id="BC110857">
    <property type="protein sequence ID" value="AAI10858.1"/>
    <property type="molecule type" value="mRNA"/>
</dbReference>
<dbReference type="CCDS" id="CCDS5508.1"/>
<dbReference type="RefSeq" id="NP_940972.2">
    <property type="nucleotide sequence ID" value="NM_198570.5"/>
</dbReference>
<dbReference type="SMR" id="Q2TAL6"/>
<dbReference type="BioGRID" id="131984">
    <property type="interactions" value="63"/>
</dbReference>
<dbReference type="FunCoup" id="Q2TAL6">
    <property type="interactions" value="39"/>
</dbReference>
<dbReference type="IntAct" id="Q2TAL6">
    <property type="interactions" value="58"/>
</dbReference>
<dbReference type="STRING" id="9606.ENSP00000341819"/>
<dbReference type="BioMuta" id="VWC2"/>
<dbReference type="DMDM" id="121941771"/>
<dbReference type="MassIVE" id="Q2TAL6"/>
<dbReference type="PaxDb" id="9606-ENSP00000341819"/>
<dbReference type="PeptideAtlas" id="Q2TAL6"/>
<dbReference type="ProteomicsDB" id="61467"/>
<dbReference type="Antibodypedia" id="62692">
    <property type="antibodies" value="59 antibodies from 13 providers"/>
</dbReference>
<dbReference type="DNASU" id="375567"/>
<dbReference type="Ensembl" id="ENST00000340652.5">
    <property type="protein sequence ID" value="ENSP00000341819.3"/>
    <property type="gene ID" value="ENSG00000188730.5"/>
</dbReference>
<dbReference type="GeneID" id="375567"/>
<dbReference type="KEGG" id="hsa:375567"/>
<dbReference type="MANE-Select" id="ENST00000340652.5">
    <property type="protein sequence ID" value="ENSP00000341819.3"/>
    <property type="RefSeq nucleotide sequence ID" value="NM_198570.5"/>
    <property type="RefSeq protein sequence ID" value="NP_940972.2"/>
</dbReference>
<dbReference type="UCSC" id="uc003tot.2">
    <property type="organism name" value="human"/>
</dbReference>
<dbReference type="AGR" id="HGNC:30200"/>
<dbReference type="CTD" id="375567"/>
<dbReference type="DisGeNET" id="375567"/>
<dbReference type="GeneCards" id="VWC2"/>
<dbReference type="HGNC" id="HGNC:30200">
    <property type="gene designation" value="VWC2"/>
</dbReference>
<dbReference type="HPA" id="ENSG00000188730">
    <property type="expression patterns" value="Group enriched (brain, heart muscle, ovary)"/>
</dbReference>
<dbReference type="MIM" id="611108">
    <property type="type" value="gene"/>
</dbReference>
<dbReference type="neXtProt" id="NX_Q2TAL6"/>
<dbReference type="OpenTargets" id="ENSG00000188730"/>
<dbReference type="PharmGKB" id="PA147357154"/>
<dbReference type="VEuPathDB" id="HostDB:ENSG00000188730"/>
<dbReference type="eggNOG" id="ENOG502QW4Q">
    <property type="taxonomic scope" value="Eukaryota"/>
</dbReference>
<dbReference type="GeneTree" id="ENSGT00720000108792"/>
<dbReference type="HOGENOM" id="CLU_073865_0_0_1"/>
<dbReference type="InParanoid" id="Q2TAL6"/>
<dbReference type="OMA" id="EKCHCEA"/>
<dbReference type="OrthoDB" id="8574072at2759"/>
<dbReference type="PAN-GO" id="Q2TAL6">
    <property type="GO annotations" value="3 GO annotations based on evolutionary models"/>
</dbReference>
<dbReference type="PhylomeDB" id="Q2TAL6"/>
<dbReference type="TreeFam" id="TF329913"/>
<dbReference type="PathwayCommons" id="Q2TAL6"/>
<dbReference type="SignaLink" id="Q2TAL6"/>
<dbReference type="BioGRID-ORCS" id="375567">
    <property type="hits" value="9 hits in 1139 CRISPR screens"/>
</dbReference>
<dbReference type="ChiTaRS" id="VWC2">
    <property type="organism name" value="human"/>
</dbReference>
<dbReference type="GenomeRNAi" id="375567"/>
<dbReference type="Pharos" id="Q2TAL6">
    <property type="development level" value="Tdark"/>
</dbReference>
<dbReference type="PRO" id="PR:Q2TAL6"/>
<dbReference type="Proteomes" id="UP000005640">
    <property type="component" value="Chromosome 7"/>
</dbReference>
<dbReference type="RNAct" id="Q2TAL6">
    <property type="molecule type" value="protein"/>
</dbReference>
<dbReference type="Bgee" id="ENSG00000188730">
    <property type="expression patterns" value="Expressed in cerebellar cortex and 73 other cell types or tissues"/>
</dbReference>
<dbReference type="GO" id="GO:0032281">
    <property type="term" value="C:AMPA glutamate receptor complex"/>
    <property type="evidence" value="ECO:0000318"/>
    <property type="project" value="GO_Central"/>
</dbReference>
<dbReference type="GO" id="GO:0005604">
    <property type="term" value="C:basement membrane"/>
    <property type="evidence" value="ECO:0007669"/>
    <property type="project" value="UniProtKB-SubCell"/>
</dbReference>
<dbReference type="GO" id="GO:0005615">
    <property type="term" value="C:extracellular space"/>
    <property type="evidence" value="ECO:0000250"/>
    <property type="project" value="HGNC-UCL"/>
</dbReference>
<dbReference type="GO" id="GO:0098890">
    <property type="term" value="C:extrinsic component of postsynaptic membrane"/>
    <property type="evidence" value="ECO:0007669"/>
    <property type="project" value="Ensembl"/>
</dbReference>
<dbReference type="GO" id="GO:0098978">
    <property type="term" value="C:glutamatergic synapse"/>
    <property type="evidence" value="ECO:0007669"/>
    <property type="project" value="Ensembl"/>
</dbReference>
<dbReference type="GO" id="GO:0005614">
    <property type="term" value="C:interstitial matrix"/>
    <property type="evidence" value="ECO:0007669"/>
    <property type="project" value="Ensembl"/>
</dbReference>
<dbReference type="GO" id="GO:0030514">
    <property type="term" value="P:negative regulation of BMP signaling pathway"/>
    <property type="evidence" value="ECO:0000250"/>
    <property type="project" value="HGNC-UCL"/>
</dbReference>
<dbReference type="GO" id="GO:0099645">
    <property type="term" value="P:neurotransmitter receptor localization to postsynaptic specialization membrane"/>
    <property type="evidence" value="ECO:0007669"/>
    <property type="project" value="Ensembl"/>
</dbReference>
<dbReference type="GO" id="GO:0010811">
    <property type="term" value="P:positive regulation of cell-substrate adhesion"/>
    <property type="evidence" value="ECO:0007669"/>
    <property type="project" value="Ensembl"/>
</dbReference>
<dbReference type="GO" id="GO:0045666">
    <property type="term" value="P:positive regulation of neuron differentiation"/>
    <property type="evidence" value="ECO:0000250"/>
    <property type="project" value="HGNC-UCL"/>
</dbReference>
<dbReference type="Gene3D" id="6.20.200.20">
    <property type="match status" value="1"/>
</dbReference>
<dbReference type="InterPro" id="IPR042979">
    <property type="entry name" value="VWC2/VWC2L"/>
</dbReference>
<dbReference type="InterPro" id="IPR001007">
    <property type="entry name" value="VWF_dom"/>
</dbReference>
<dbReference type="PANTHER" id="PTHR46252:SF4">
    <property type="entry name" value="BRORIN"/>
    <property type="match status" value="1"/>
</dbReference>
<dbReference type="PANTHER" id="PTHR46252">
    <property type="entry name" value="BRORIN FAMILY MEMBER"/>
    <property type="match status" value="1"/>
</dbReference>
<dbReference type="Pfam" id="PF23333">
    <property type="entry name" value="VWC2L_1st"/>
    <property type="match status" value="1"/>
</dbReference>
<dbReference type="Pfam" id="PF23334">
    <property type="entry name" value="VWC2L_2nd"/>
    <property type="match status" value="1"/>
</dbReference>
<dbReference type="Pfam" id="PF23331">
    <property type="entry name" value="VWC2L_C"/>
    <property type="match status" value="1"/>
</dbReference>
<dbReference type="SMART" id="SM00214">
    <property type="entry name" value="VWC"/>
    <property type="match status" value="2"/>
</dbReference>
<dbReference type="SUPFAM" id="SSF57603">
    <property type="entry name" value="FnI-like domain"/>
    <property type="match status" value="1"/>
</dbReference>
<dbReference type="PROSITE" id="PS01208">
    <property type="entry name" value="VWFC_1"/>
    <property type="match status" value="1"/>
</dbReference>
<dbReference type="PROSITE" id="PS50184">
    <property type="entry name" value="VWFC_2"/>
    <property type="match status" value="1"/>
</dbReference>
<sequence>MPSSTAMAVGALSSSLLVTCCLMVALCSPSIPLEKLAQAPEQPGQEKREHASRDGPGRVNELGRPARDEGGSGRDWKSKSGRGLAGREPWSKLKQAWVSQGGGAKAGDLQVRPRGDTPQAEALAAAAQDAIGPELAPTPEPPEEYVYPDYRGKGCVDESGFVYAIGEKFAPGPSACPCLCTEEGPLCAQPECPRLHPRCIHVDTSQCCPQCKERKNYCEFRGKTYQTLEEFVVSPCERCRCEANGEVLCTVSACPQTECVDPVYEPDQCCPICKNGPNCFAETAVIPAGREVKTDECTICHCTYEEGTWRIERQAMCTRHECRQM</sequence>
<gene>
    <name type="primary">VWC2</name>
    <name type="ORF">UNQ739/PRO1434</name>
</gene>
<comment type="function">
    <text evidence="1">BMP antagonist which may play a role in neural development. Promotes cell adhesion (By similarity).</text>
</comment>
<comment type="subunit">
    <text evidence="1">Peripherally associated with AMPAR complex. AMPAR complex consists of an inner core made of 4 pore-forming GluA/GRIA proteins (GRIA1, GRIA2, GRIA3 and GRIA4) and 4 major auxiliary subunits arranged in a twofold symmetry. One of the two pairs of distinct binding sites is occupied either by CNIH2, CNIH3 or CACNG2, CACNG3. The other harbors CACNG2, CACNG3, CACNG4, CACNG8 or GSG1L. This inner core of AMPAR complex is complemented by outer core constituents binding directly to the GluA/GRIA proteins at sites distinct from the interaction sites of the inner core constituents. Outer core constituents include at least PRRT1, PRRT2, CKAMP44/SHISA9, FRRS1L and NRN1. The proteins of the inner and outer core serve as a platform for other, more peripherally associated AMPAR constituents, including VWC2. Alone or in combination, these auxiliary subunits control the gating and pharmacology of the AMPAR complex and profoundly impact their biogenesis and protein processing (By similarity).</text>
</comment>
<comment type="interaction">
    <interactant intactId="EBI-11957238">
        <id>Q2TAL6</id>
    </interactant>
    <interactant intactId="EBI-2824666">
        <id>Q6UXT9</id>
        <label>ABHD15</label>
    </interactant>
    <organismsDiffer>false</organismsDiffer>
    <experiments>3</experiments>
</comment>
<comment type="interaction">
    <interactant intactId="EBI-11957238">
        <id>Q2TAL6</id>
    </interactant>
    <interactant intactId="EBI-10173507">
        <id>Q6UY14-3</id>
        <label>ADAMTSL4</label>
    </interactant>
    <organismsDiffer>false</organismsDiffer>
    <experiments>6</experiments>
</comment>
<comment type="interaction">
    <interactant intactId="EBI-11957238">
        <id>Q2TAL6</id>
    </interactant>
    <interactant intactId="EBI-1166928">
        <id>Q8N5M1</id>
        <label>ATPAF2</label>
    </interactant>
    <organismsDiffer>false</organismsDiffer>
    <experiments>3</experiments>
</comment>
<comment type="interaction">
    <interactant intactId="EBI-11957238">
        <id>Q2TAL6</id>
    </interactant>
    <interactant intactId="EBI-1748958">
        <id>P49069</id>
        <label>CAMLG</label>
    </interactant>
    <organismsDiffer>false</organismsDiffer>
    <experiments>3</experiments>
</comment>
<comment type="interaction">
    <interactant intactId="EBI-11957238">
        <id>Q2TAL6</id>
    </interactant>
    <interactant intactId="EBI-744545">
        <id>Q8NEC5</id>
        <label>CATSPER1</label>
    </interactant>
    <organismsDiffer>false</organismsDiffer>
    <experiments>3</experiments>
</comment>
<comment type="interaction">
    <interactant intactId="EBI-11957238">
        <id>Q2TAL6</id>
    </interactant>
    <interactant intactId="EBI-741032">
        <id>Q8NE01</id>
        <label>CNNM3</label>
    </interactant>
    <organismsDiffer>false</organismsDiffer>
    <experiments>5</experiments>
</comment>
<comment type="interaction">
    <interactant intactId="EBI-11957238">
        <id>Q2TAL6</id>
    </interactant>
    <interactant intactId="EBI-2212355">
        <id>Q49AN0</id>
        <label>CRY2</label>
    </interactant>
    <organismsDiffer>false</organismsDiffer>
    <experiments>3</experiments>
</comment>
<comment type="interaction">
    <interactant intactId="EBI-11957238">
        <id>Q2TAL6</id>
    </interactant>
    <interactant intactId="EBI-3867333">
        <id>A8MQ03</id>
        <label>CYSRT1</label>
    </interactant>
    <organismsDiffer>false</organismsDiffer>
    <experiments>3</experiments>
</comment>
<comment type="interaction">
    <interactant intactId="EBI-11957238">
        <id>Q2TAL6</id>
    </interactant>
    <interactant intactId="EBI-744099">
        <id>Q9H0I2</id>
        <label>ENKD1</label>
    </interactant>
    <organismsDiffer>false</organismsDiffer>
    <experiments>3</experiments>
</comment>
<comment type="interaction">
    <interactant intactId="EBI-11957238">
        <id>Q2TAL6</id>
    </interactant>
    <interactant intactId="EBI-6658203">
        <id>Q86YD7</id>
        <label>FAM90A1</label>
    </interactant>
    <organismsDiffer>false</organismsDiffer>
    <experiments>3</experiments>
</comment>
<comment type="interaction">
    <interactant intactId="EBI-11957238">
        <id>Q2TAL6</id>
    </interactant>
    <interactant intactId="EBI-741068">
        <id>Q969U6</id>
        <label>FBXW5</label>
    </interactant>
    <organismsDiffer>false</organismsDiffer>
    <experiments>3</experiments>
</comment>
<comment type="interaction">
    <interactant intactId="EBI-11957238">
        <id>Q2TAL6</id>
    </interactant>
    <interactant intactId="EBI-9050116">
        <id>Q9BTY2</id>
        <label>FUCA2</label>
    </interactant>
    <organismsDiffer>false</organismsDiffer>
    <experiments>3</experiments>
</comment>
<comment type="interaction">
    <interactant intactId="EBI-11957238">
        <id>Q2TAL6</id>
    </interactant>
    <interactant intactId="EBI-2515857">
        <id>O43681</id>
        <label>GET3</label>
    </interactant>
    <organismsDiffer>false</organismsDiffer>
    <experiments>3</experiments>
</comment>
<comment type="interaction">
    <interactant intactId="EBI-11957238">
        <id>Q2TAL6</id>
    </interactant>
    <interactant intactId="EBI-11975289">
        <id>Q9Y223-2</id>
        <label>GNE</label>
    </interactant>
    <organismsDiffer>false</organismsDiffer>
    <experiments>3</experiments>
</comment>
<comment type="interaction">
    <interactant intactId="EBI-11957238">
        <id>Q2TAL6</id>
    </interactant>
    <interactant intactId="EBI-11956675">
        <id>Q9GZV7</id>
        <label>HAPLN2</label>
    </interactant>
    <organismsDiffer>false</organismsDiffer>
    <experiments>3</experiments>
</comment>
<comment type="interaction">
    <interactant intactId="EBI-11957238">
        <id>Q2TAL6</id>
    </interactant>
    <interactant intactId="EBI-740785">
        <id>P49639</id>
        <label>HOXA1</label>
    </interactant>
    <organismsDiffer>false</organismsDiffer>
    <experiments>6</experiments>
</comment>
<comment type="interaction">
    <interactant intactId="EBI-11957238">
        <id>Q2TAL6</id>
    </interactant>
    <interactant intactId="EBI-12197079">
        <id>P84074</id>
        <label>HPCA</label>
    </interactant>
    <organismsDiffer>false</organismsDiffer>
    <experiments>3</experiments>
</comment>
<comment type="interaction">
    <interactant intactId="EBI-11957238">
        <id>Q2TAL6</id>
    </interactant>
    <interactant intactId="EBI-749311">
        <id>P37235</id>
        <label>HPCAL1</label>
    </interactant>
    <organismsDiffer>false</organismsDiffer>
    <experiments>3</experiments>
</comment>
<comment type="interaction">
    <interactant intactId="EBI-11957238">
        <id>Q2TAL6</id>
    </interactant>
    <interactant intactId="EBI-2556193">
        <id>Q63ZY3</id>
        <label>KANK2</label>
    </interactant>
    <organismsDiffer>false</organismsDiffer>
    <experiments>3</experiments>
</comment>
<comment type="interaction">
    <interactant intactId="EBI-11957238">
        <id>Q2TAL6</id>
    </interactant>
    <interactant intactId="EBI-10981970">
        <id>Q5T749</id>
        <label>KPRP</label>
    </interactant>
    <organismsDiffer>false</organismsDiffer>
    <experiments>3</experiments>
</comment>
<comment type="interaction">
    <interactant intactId="EBI-11957238">
        <id>Q2TAL6</id>
    </interactant>
    <interactant intactId="EBI-10171774">
        <id>P60410</id>
        <label>KRTAP10-8</label>
    </interactant>
    <organismsDiffer>false</organismsDiffer>
    <experiments>3</experiments>
</comment>
<comment type="interaction">
    <interactant intactId="EBI-11957238">
        <id>Q2TAL6</id>
    </interactant>
    <interactant intactId="EBI-11953846">
        <id>Q52LG2</id>
        <label>KRTAP13-2</label>
    </interactant>
    <organismsDiffer>false</organismsDiffer>
    <experiments>3</experiments>
</comment>
<comment type="interaction">
    <interactant intactId="EBI-11957238">
        <id>Q2TAL6</id>
    </interactant>
    <interactant intactId="EBI-10241252">
        <id>Q3SY46</id>
        <label>KRTAP13-3</label>
    </interactant>
    <organismsDiffer>false</organismsDiffer>
    <experiments>3</experiments>
</comment>
<comment type="interaction">
    <interactant intactId="EBI-11957238">
        <id>Q2TAL6</id>
    </interactant>
    <interactant intactId="EBI-14065470">
        <id>Q9BYR9</id>
        <label>KRTAP2-4</label>
    </interactant>
    <organismsDiffer>false</organismsDiffer>
    <experiments>3</experiments>
</comment>
<comment type="interaction">
    <interactant intactId="EBI-11957238">
        <id>Q2TAL6</id>
    </interactant>
    <interactant intactId="EBI-3958099">
        <id>P26371</id>
        <label>KRTAP5-9</label>
    </interactant>
    <organismsDiffer>false</organismsDiffer>
    <experiments>3</experiments>
</comment>
<comment type="interaction">
    <interactant intactId="EBI-11957238">
        <id>Q2TAL6</id>
    </interactant>
    <interactant intactId="EBI-11962058">
        <id>Q5T7P2</id>
        <label>LCE1A</label>
    </interactant>
    <organismsDiffer>false</organismsDiffer>
    <experiments>3</experiments>
</comment>
<comment type="interaction">
    <interactant intactId="EBI-11957238">
        <id>Q2TAL6</id>
    </interactant>
    <interactant intactId="EBI-12224199">
        <id>Q5T751</id>
        <label>LCE1C</label>
    </interactant>
    <organismsDiffer>false</organismsDiffer>
    <experiments>3</experiments>
</comment>
<comment type="interaction">
    <interactant intactId="EBI-11957238">
        <id>Q2TAL6</id>
    </interactant>
    <interactant intactId="EBI-11958008">
        <id>Q5T754</id>
        <label>LCE1F</label>
    </interactant>
    <organismsDiffer>false</organismsDiffer>
    <experiments>3</experiments>
</comment>
<comment type="interaction">
    <interactant intactId="EBI-11957238">
        <id>Q2TAL6</id>
    </interactant>
    <interactant intactId="EBI-11973993">
        <id>Q5TA81</id>
        <label>LCE2C</label>
    </interactant>
    <organismsDiffer>false</organismsDiffer>
    <experiments>3</experiments>
</comment>
<comment type="interaction">
    <interactant intactId="EBI-11957238">
        <id>Q2TAL6</id>
    </interactant>
    <interactant intactId="EBI-10246750">
        <id>Q5TA82</id>
        <label>LCE2D</label>
    </interactant>
    <organismsDiffer>false</organismsDiffer>
    <experiments>3</experiments>
</comment>
<comment type="interaction">
    <interactant intactId="EBI-11957238">
        <id>Q2TAL6</id>
    </interactant>
    <interactant intactId="EBI-9394625">
        <id>Q5TA76</id>
        <label>LCE3A</label>
    </interactant>
    <organismsDiffer>false</organismsDiffer>
    <experiments>3</experiments>
</comment>
<comment type="interaction">
    <interactant intactId="EBI-11957238">
        <id>Q2TAL6</id>
    </interactant>
    <interactant intactId="EBI-6658837">
        <id>Q9BYE3</id>
        <label>LCE3D</label>
    </interactant>
    <organismsDiffer>false</organismsDiffer>
    <experiments>3</experiments>
</comment>
<comment type="interaction">
    <interactant intactId="EBI-11957238">
        <id>Q2TAL6</id>
    </interactant>
    <interactant intactId="EBI-10245456">
        <id>Q5T5B0</id>
        <label>LCE3E</label>
    </interactant>
    <organismsDiffer>false</organismsDiffer>
    <experiments>3</experiments>
</comment>
<comment type="interaction">
    <interactant intactId="EBI-11957238">
        <id>Q2TAL6</id>
    </interactant>
    <interactant intactId="EBI-10246358">
        <id>Q5TA78</id>
        <label>LCE4A</label>
    </interactant>
    <organismsDiffer>false</organismsDiffer>
    <experiments>3</experiments>
</comment>
<comment type="interaction">
    <interactant intactId="EBI-11957238">
        <id>Q2TAL6</id>
    </interactant>
    <interactant intactId="EBI-12027160">
        <id>Q9P121-3</id>
        <label>NTM</label>
    </interactant>
    <organismsDiffer>false</organismsDiffer>
    <experiments>3</experiments>
</comment>
<comment type="interaction">
    <interactant intactId="EBI-11957238">
        <id>Q2TAL6</id>
    </interactant>
    <interactant intactId="EBI-740446">
        <id>P32242</id>
        <label>OTX1</label>
    </interactant>
    <organismsDiffer>false</organismsDiffer>
    <experiments>3</experiments>
</comment>
<comment type="interaction">
    <interactant intactId="EBI-11957238">
        <id>Q2TAL6</id>
    </interactant>
    <interactant intactId="EBI-709807">
        <id>P16118</id>
        <label>PFKFB1</label>
    </interactant>
    <organismsDiffer>false</organismsDiffer>
    <experiments>3</experiments>
</comment>
<comment type="interaction">
    <interactant intactId="EBI-11957238">
        <id>Q2TAL6</id>
    </interactant>
    <interactant intactId="EBI-17236143">
        <id>Q12837</id>
        <label>POU4F2</label>
    </interactant>
    <organismsDiffer>false</organismsDiffer>
    <experiments>3</experiments>
</comment>
<comment type="interaction">
    <interactant intactId="EBI-11957238">
        <id>Q2TAL6</id>
    </interactant>
    <interactant intactId="EBI-1567797">
        <id>Q8WWY3</id>
        <label>PRPF31</label>
    </interactant>
    <organismsDiffer>false</organismsDiffer>
    <experiments>3</experiments>
</comment>
<comment type="interaction">
    <interactant intactId="EBI-11957238">
        <id>Q2TAL6</id>
    </interactant>
    <interactant intactId="EBI-748391">
        <id>Q9BWG6</id>
        <label>SCNM1</label>
    </interactant>
    <organismsDiffer>false</organismsDiffer>
    <experiments>3</experiments>
</comment>
<comment type="interaction">
    <interactant intactId="EBI-11957238">
        <id>Q2TAL6</id>
    </interactant>
    <interactant intactId="EBI-744081">
        <id>Q96EQ0</id>
        <label>SGTB</label>
    </interactant>
    <organismsDiffer>false</organismsDiffer>
    <experiments>3</experiments>
</comment>
<comment type="interaction">
    <interactant intactId="EBI-11957238">
        <id>Q2TAL6</id>
    </interactant>
    <interactant intactId="EBI-11955083">
        <id>Q9NUL5-4</id>
        <label>SHFL</label>
    </interactant>
    <organismsDiffer>false</organismsDiffer>
    <experiments>3</experiments>
</comment>
<comment type="interaction">
    <interactant intactId="EBI-11957238">
        <id>Q2TAL6</id>
    </interactant>
    <interactant intactId="EBI-3866665">
        <id>O43609</id>
        <label>SPRY1</label>
    </interactant>
    <organismsDiffer>false</organismsDiffer>
    <experiments>3</experiments>
</comment>
<comment type="interaction">
    <interactant intactId="EBI-11957238">
        <id>Q2TAL6</id>
    </interactant>
    <interactant intactId="EBI-719893">
        <id>Q8WVR3</id>
        <label>TRAPPC14</label>
    </interactant>
    <organismsDiffer>false</organismsDiffer>
    <experiments>3</experiments>
</comment>
<comment type="interaction">
    <interactant intactId="EBI-11957238">
        <id>Q2TAL6</id>
    </interactant>
    <interactant intactId="EBI-741480">
        <id>Q9UMX0</id>
        <label>UBQLN1</label>
    </interactant>
    <organismsDiffer>false</organismsDiffer>
    <experiments>3</experiments>
</comment>
<comment type="interaction">
    <interactant intactId="EBI-11957238">
        <id>Q2TAL6</id>
    </interactant>
    <interactant intactId="EBI-947187">
        <id>Q9UHD9</id>
        <label>UBQLN2</label>
    </interactant>
    <organismsDiffer>false</organismsDiffer>
    <experiments>3</experiments>
</comment>
<comment type="interaction">
    <interactant intactId="EBI-11957238">
        <id>Q2TAL6</id>
    </interactant>
    <interactant intactId="EBI-10249550">
        <id>Q6EMK4</id>
        <label>VASN</label>
    </interactant>
    <organismsDiffer>false</organismsDiffer>
    <experiments>3</experiments>
</comment>
<comment type="interaction">
    <interactant intactId="EBI-11957238">
        <id>Q2TAL6</id>
    </interactant>
    <interactant intactId="EBI-765538">
        <id>P25490</id>
        <label>YY1</label>
    </interactant>
    <organismsDiffer>false</organismsDiffer>
    <experiments>3</experiments>
</comment>
<comment type="interaction">
    <interactant intactId="EBI-11957238">
        <id>Q2TAL6</id>
    </interactant>
    <interactant intactId="EBI-11993110">
        <id>Q9P2F9</id>
        <label>ZNF319</label>
    </interactant>
    <organismsDiffer>false</organismsDiffer>
    <experiments>3</experiments>
</comment>
<comment type="interaction">
    <interactant intactId="EBI-11957238">
        <id>Q2TAL6</id>
    </interactant>
    <interactant intactId="EBI-740727">
        <id>Q8TAU3</id>
        <label>ZNF417</label>
    </interactant>
    <organismsDiffer>false</organismsDiffer>
    <experiments>3</experiments>
</comment>
<comment type="interaction">
    <interactant intactId="EBI-11957238">
        <id>Q2TAL6</id>
    </interactant>
    <interactant intactId="EBI-1105370">
        <id>Q9ULM2</id>
        <label>ZNF490</label>
    </interactant>
    <organismsDiffer>false</organismsDiffer>
    <experiments>3</experiments>
</comment>
<comment type="interaction">
    <interactant intactId="EBI-11957238">
        <id>Q2TAL6</id>
    </interactant>
    <interactant intactId="EBI-10486136">
        <id>Q6ZNH5</id>
        <label>ZNF497</label>
    </interactant>
    <organismsDiffer>false</organismsDiffer>
    <experiments>3</experiments>
</comment>
<comment type="interaction">
    <interactant intactId="EBI-11957238">
        <id>Q2TAL6</id>
    </interactant>
    <interactant intactId="EBI-6427977">
        <id>Q96SQ5</id>
        <label>ZNF587</label>
    </interactant>
    <organismsDiffer>false</organismsDiffer>
    <experiments>3</experiments>
</comment>
<comment type="interaction">
    <interactant intactId="EBI-11957238">
        <id>Q2TAL6</id>
    </interactant>
    <interactant intactId="EBI-11090299">
        <id>Q9H7X3</id>
        <label>ZNF696</label>
    </interactant>
    <organismsDiffer>false</organismsDiffer>
    <experiments>4</experiments>
</comment>
<comment type="interaction">
    <interactant intactId="EBI-11957238">
        <id>Q2TAL6</id>
    </interactant>
    <interactant intactId="EBI-10251462">
        <id>Q6NX45</id>
        <label>ZNF774</label>
    </interactant>
    <organismsDiffer>false</organismsDiffer>
    <experiments>3</experiments>
</comment>
<comment type="interaction">
    <interactant intactId="EBI-11957238">
        <id>Q2TAL6</id>
    </interactant>
    <interactant intactId="EBI-11962574">
        <id>Q96EG3</id>
        <label>ZNF837</label>
    </interactant>
    <organismsDiffer>false</organismsDiffer>
    <experiments>3</experiments>
</comment>
<comment type="subcellular location">
    <subcellularLocation>
        <location evidence="1">Secreted</location>
        <location evidence="1">Extracellular space</location>
        <location evidence="1">Extracellular matrix</location>
        <location evidence="1">Basement membrane</location>
    </subcellularLocation>
    <subcellularLocation>
        <location evidence="1">Synapse</location>
    </subcellularLocation>
</comment>
<protein>
    <recommendedName>
        <fullName>Brorin</fullName>
    </recommendedName>
    <alternativeName>
        <fullName>Brain-specific chordin-like protein</fullName>
    </alternativeName>
    <alternativeName>
        <fullName>von Willebrand factor C domain-containing protein 2</fullName>
    </alternativeName>
</protein>
<organism>
    <name type="scientific">Homo sapiens</name>
    <name type="common">Human</name>
    <dbReference type="NCBI Taxonomy" id="9606"/>
    <lineage>
        <taxon>Eukaryota</taxon>
        <taxon>Metazoa</taxon>
        <taxon>Chordata</taxon>
        <taxon>Craniata</taxon>
        <taxon>Vertebrata</taxon>
        <taxon>Euteleostomi</taxon>
        <taxon>Mammalia</taxon>
        <taxon>Eutheria</taxon>
        <taxon>Euarchontoglires</taxon>
        <taxon>Primates</taxon>
        <taxon>Haplorrhini</taxon>
        <taxon>Catarrhini</taxon>
        <taxon>Hominidae</taxon>
        <taxon>Homo</taxon>
    </lineage>
</organism>
<keyword id="KW-0084">Basement membrane</keyword>
<keyword id="KW-0272">Extracellular matrix</keyword>
<keyword id="KW-1267">Proteomics identification</keyword>
<keyword id="KW-1185">Reference proteome</keyword>
<keyword id="KW-0677">Repeat</keyword>
<keyword id="KW-0964">Secreted</keyword>
<keyword id="KW-0732">Signal</keyword>
<keyword id="KW-0770">Synapse</keyword>